<reference key="1">
    <citation type="journal article" date="2005" name="Proc. Natl. Acad. Sci. U.S.A.">
        <title>Complete genome sequence of Vibrio fischeri: a symbiotic bacterium with pathogenic congeners.</title>
        <authorList>
            <person name="Ruby E.G."/>
            <person name="Urbanowski M."/>
            <person name="Campbell J."/>
            <person name="Dunn A."/>
            <person name="Faini M."/>
            <person name="Gunsalus R."/>
            <person name="Lostroh P."/>
            <person name="Lupp C."/>
            <person name="McCann J."/>
            <person name="Millikan D."/>
            <person name="Schaefer A."/>
            <person name="Stabb E."/>
            <person name="Stevens A."/>
            <person name="Visick K."/>
            <person name="Whistler C."/>
            <person name="Greenberg E.P."/>
        </authorList>
    </citation>
    <scope>NUCLEOTIDE SEQUENCE [LARGE SCALE GENOMIC DNA]</scope>
    <source>
        <strain>ATCC 700601 / ES114</strain>
    </source>
</reference>
<feature type="chain" id="PRO_0000149484" description="Adenine phosphoribosyltransferase">
    <location>
        <begin position="1"/>
        <end position="181"/>
    </location>
</feature>
<sequence>MSTETLTLIKNSIKSIPDYPKAGIMFRDVTSLMEDPKAYQATIQSLVEKYKQGGFTKIVGTEARGFLFGAPLALELGVGFVPVRKPGKLPRPTIAQTYDLEYGTDTLEIHTDAIVEGDKVLVVDDLLATGGTIEATVKLIRQLGGEVEHAAFVINLPEIGGETRLEGLGLNVYSICEFAGH</sequence>
<accession>Q5E463</accession>
<gene>
    <name evidence="1" type="primary">apt</name>
    <name type="ordered locus">VF_1688</name>
</gene>
<evidence type="ECO:0000255" key="1">
    <source>
        <dbReference type="HAMAP-Rule" id="MF_00004"/>
    </source>
</evidence>
<dbReference type="EC" id="2.4.2.7" evidence="1"/>
<dbReference type="EMBL" id="CP000020">
    <property type="protein sequence ID" value="AAW86183.1"/>
    <property type="molecule type" value="Genomic_DNA"/>
</dbReference>
<dbReference type="RefSeq" id="WP_011262241.1">
    <property type="nucleotide sequence ID" value="NC_006840.2"/>
</dbReference>
<dbReference type="RefSeq" id="YP_205071.1">
    <property type="nucleotide sequence ID" value="NC_006840.2"/>
</dbReference>
<dbReference type="SMR" id="Q5E463"/>
<dbReference type="STRING" id="312309.VF_1688"/>
<dbReference type="EnsemblBacteria" id="AAW86183">
    <property type="protein sequence ID" value="AAW86183"/>
    <property type="gene ID" value="VF_1688"/>
</dbReference>
<dbReference type="GeneID" id="54164382"/>
<dbReference type="KEGG" id="vfi:VF_1688"/>
<dbReference type="PATRIC" id="fig|312309.11.peg.1709"/>
<dbReference type="eggNOG" id="COG0503">
    <property type="taxonomic scope" value="Bacteria"/>
</dbReference>
<dbReference type="HOGENOM" id="CLU_063339_3_0_6"/>
<dbReference type="OrthoDB" id="9803963at2"/>
<dbReference type="UniPathway" id="UPA00588">
    <property type="reaction ID" value="UER00646"/>
</dbReference>
<dbReference type="Proteomes" id="UP000000537">
    <property type="component" value="Chromosome I"/>
</dbReference>
<dbReference type="GO" id="GO:0005737">
    <property type="term" value="C:cytoplasm"/>
    <property type="evidence" value="ECO:0007669"/>
    <property type="project" value="UniProtKB-SubCell"/>
</dbReference>
<dbReference type="GO" id="GO:0002055">
    <property type="term" value="F:adenine binding"/>
    <property type="evidence" value="ECO:0007669"/>
    <property type="project" value="TreeGrafter"/>
</dbReference>
<dbReference type="GO" id="GO:0003999">
    <property type="term" value="F:adenine phosphoribosyltransferase activity"/>
    <property type="evidence" value="ECO:0007669"/>
    <property type="project" value="UniProtKB-UniRule"/>
</dbReference>
<dbReference type="GO" id="GO:0016208">
    <property type="term" value="F:AMP binding"/>
    <property type="evidence" value="ECO:0007669"/>
    <property type="project" value="TreeGrafter"/>
</dbReference>
<dbReference type="GO" id="GO:0006168">
    <property type="term" value="P:adenine salvage"/>
    <property type="evidence" value="ECO:0007669"/>
    <property type="project" value="InterPro"/>
</dbReference>
<dbReference type="GO" id="GO:0044209">
    <property type="term" value="P:AMP salvage"/>
    <property type="evidence" value="ECO:0007669"/>
    <property type="project" value="UniProtKB-UniRule"/>
</dbReference>
<dbReference type="GO" id="GO:0006166">
    <property type="term" value="P:purine ribonucleoside salvage"/>
    <property type="evidence" value="ECO:0007669"/>
    <property type="project" value="UniProtKB-KW"/>
</dbReference>
<dbReference type="CDD" id="cd06223">
    <property type="entry name" value="PRTases_typeI"/>
    <property type="match status" value="1"/>
</dbReference>
<dbReference type="FunFam" id="3.40.50.2020:FF:000004">
    <property type="entry name" value="Adenine phosphoribosyltransferase"/>
    <property type="match status" value="1"/>
</dbReference>
<dbReference type="Gene3D" id="3.40.50.2020">
    <property type="match status" value="1"/>
</dbReference>
<dbReference type="HAMAP" id="MF_00004">
    <property type="entry name" value="Aden_phosphoribosyltr"/>
    <property type="match status" value="1"/>
</dbReference>
<dbReference type="InterPro" id="IPR005764">
    <property type="entry name" value="Ade_phspho_trans"/>
</dbReference>
<dbReference type="InterPro" id="IPR000836">
    <property type="entry name" value="PRibTrfase_dom"/>
</dbReference>
<dbReference type="InterPro" id="IPR029057">
    <property type="entry name" value="PRTase-like"/>
</dbReference>
<dbReference type="InterPro" id="IPR050054">
    <property type="entry name" value="UPRTase/APRTase"/>
</dbReference>
<dbReference type="NCBIfam" id="TIGR01090">
    <property type="entry name" value="apt"/>
    <property type="match status" value="1"/>
</dbReference>
<dbReference type="NCBIfam" id="NF002632">
    <property type="entry name" value="PRK02304.1-1"/>
    <property type="match status" value="1"/>
</dbReference>
<dbReference type="NCBIfam" id="NF002634">
    <property type="entry name" value="PRK02304.1-3"/>
    <property type="match status" value="1"/>
</dbReference>
<dbReference type="NCBIfam" id="NF002636">
    <property type="entry name" value="PRK02304.1-5"/>
    <property type="match status" value="1"/>
</dbReference>
<dbReference type="PANTHER" id="PTHR32315">
    <property type="entry name" value="ADENINE PHOSPHORIBOSYLTRANSFERASE"/>
    <property type="match status" value="1"/>
</dbReference>
<dbReference type="PANTHER" id="PTHR32315:SF3">
    <property type="entry name" value="ADENINE PHOSPHORIBOSYLTRANSFERASE"/>
    <property type="match status" value="1"/>
</dbReference>
<dbReference type="Pfam" id="PF00156">
    <property type="entry name" value="Pribosyltran"/>
    <property type="match status" value="1"/>
</dbReference>
<dbReference type="SUPFAM" id="SSF53271">
    <property type="entry name" value="PRTase-like"/>
    <property type="match status" value="1"/>
</dbReference>
<dbReference type="PROSITE" id="PS00103">
    <property type="entry name" value="PUR_PYR_PR_TRANSFER"/>
    <property type="match status" value="1"/>
</dbReference>
<name>APT_ALIF1</name>
<proteinExistence type="inferred from homology"/>
<comment type="function">
    <text evidence="1">Catalyzes a salvage reaction resulting in the formation of AMP, that is energically less costly than de novo synthesis.</text>
</comment>
<comment type="catalytic activity">
    <reaction evidence="1">
        <text>AMP + diphosphate = 5-phospho-alpha-D-ribose 1-diphosphate + adenine</text>
        <dbReference type="Rhea" id="RHEA:16609"/>
        <dbReference type="ChEBI" id="CHEBI:16708"/>
        <dbReference type="ChEBI" id="CHEBI:33019"/>
        <dbReference type="ChEBI" id="CHEBI:58017"/>
        <dbReference type="ChEBI" id="CHEBI:456215"/>
        <dbReference type="EC" id="2.4.2.7"/>
    </reaction>
</comment>
<comment type="pathway">
    <text evidence="1">Purine metabolism; AMP biosynthesis via salvage pathway; AMP from adenine: step 1/1.</text>
</comment>
<comment type="subunit">
    <text evidence="1">Homodimer.</text>
</comment>
<comment type="subcellular location">
    <subcellularLocation>
        <location evidence="1">Cytoplasm</location>
    </subcellularLocation>
</comment>
<comment type="similarity">
    <text evidence="1">Belongs to the purine/pyrimidine phosphoribosyltransferase family.</text>
</comment>
<organism>
    <name type="scientific">Aliivibrio fischeri (strain ATCC 700601 / ES114)</name>
    <name type="common">Vibrio fischeri</name>
    <dbReference type="NCBI Taxonomy" id="312309"/>
    <lineage>
        <taxon>Bacteria</taxon>
        <taxon>Pseudomonadati</taxon>
        <taxon>Pseudomonadota</taxon>
        <taxon>Gammaproteobacteria</taxon>
        <taxon>Vibrionales</taxon>
        <taxon>Vibrionaceae</taxon>
        <taxon>Aliivibrio</taxon>
    </lineage>
</organism>
<protein>
    <recommendedName>
        <fullName evidence="1">Adenine phosphoribosyltransferase</fullName>
        <shortName evidence="1">APRT</shortName>
        <ecNumber evidence="1">2.4.2.7</ecNumber>
    </recommendedName>
</protein>
<keyword id="KW-0963">Cytoplasm</keyword>
<keyword id="KW-0328">Glycosyltransferase</keyword>
<keyword id="KW-0660">Purine salvage</keyword>
<keyword id="KW-1185">Reference proteome</keyword>
<keyword id="KW-0808">Transferase</keyword>